<accession>Q2L068</accession>
<protein>
    <recommendedName>
        <fullName evidence="2">Malate dehydrogenase</fullName>
        <ecNumber evidence="2">1.1.1.37</ecNumber>
    </recommendedName>
</protein>
<gene>
    <name evidence="2" type="primary">mdh</name>
    <name type="ordered locus">BAV1180</name>
</gene>
<organism>
    <name type="scientific">Bordetella avium (strain 197N)</name>
    <dbReference type="NCBI Taxonomy" id="360910"/>
    <lineage>
        <taxon>Bacteria</taxon>
        <taxon>Pseudomonadati</taxon>
        <taxon>Pseudomonadota</taxon>
        <taxon>Betaproteobacteria</taxon>
        <taxon>Burkholderiales</taxon>
        <taxon>Alcaligenaceae</taxon>
        <taxon>Bordetella</taxon>
    </lineage>
</organism>
<sequence>MSKPAMRVAVTGAAGQIGYALLFRIASGEMLGKDQPVILQLLEIPDEKAQKALKGVIMELEDCAFPLLQEVTAHADPKTAFKDADVALLVGARPRGPGMERKDLLTVNAQIFTAQGRALNEVASRNVKVLVVGNPANTNAYIAMKSAPDLPAKNFTAMLRLDHNRALSQLAGKSGKAVAGIEKLIVWGNHSPTMYPDYRFATVDGQPLAKLINDEAWNRDTFIPTVGKRGAAIIEARGLSSAASAANAAIDHVRDWVLGSNGKWVTMGIPSDGSYGIPEGIIYGFPVTTANGEYTMVKDLEVDAFSRERMDFTLKELLEERDGIKDLLK</sequence>
<dbReference type="EC" id="1.1.1.37" evidence="2"/>
<dbReference type="EMBL" id="AM167904">
    <property type="protein sequence ID" value="CAJ48788.1"/>
    <property type="molecule type" value="Genomic_DNA"/>
</dbReference>
<dbReference type="RefSeq" id="WP_012416862.1">
    <property type="nucleotide sequence ID" value="NC_010645.1"/>
</dbReference>
<dbReference type="SMR" id="Q2L068"/>
<dbReference type="STRING" id="360910.BAV1180"/>
<dbReference type="GeneID" id="92935628"/>
<dbReference type="KEGG" id="bav:BAV1180"/>
<dbReference type="eggNOG" id="COG0039">
    <property type="taxonomic scope" value="Bacteria"/>
</dbReference>
<dbReference type="HOGENOM" id="CLU_040727_2_0_4"/>
<dbReference type="OrthoDB" id="9802969at2"/>
<dbReference type="Proteomes" id="UP000001977">
    <property type="component" value="Chromosome"/>
</dbReference>
<dbReference type="GO" id="GO:0030060">
    <property type="term" value="F:L-malate dehydrogenase (NAD+) activity"/>
    <property type="evidence" value="ECO:0007669"/>
    <property type="project" value="UniProtKB-UniRule"/>
</dbReference>
<dbReference type="GO" id="GO:0006108">
    <property type="term" value="P:malate metabolic process"/>
    <property type="evidence" value="ECO:0007669"/>
    <property type="project" value="InterPro"/>
</dbReference>
<dbReference type="GO" id="GO:0006099">
    <property type="term" value="P:tricarboxylic acid cycle"/>
    <property type="evidence" value="ECO:0007669"/>
    <property type="project" value="UniProtKB-UniRule"/>
</dbReference>
<dbReference type="CDD" id="cd01338">
    <property type="entry name" value="MDH_chloroplast-like"/>
    <property type="match status" value="1"/>
</dbReference>
<dbReference type="FunFam" id="3.40.50.720:FF:000010">
    <property type="entry name" value="Malate dehydrogenase"/>
    <property type="match status" value="1"/>
</dbReference>
<dbReference type="FunFam" id="3.90.110.10:FF:000002">
    <property type="entry name" value="Malate dehydrogenase"/>
    <property type="match status" value="1"/>
</dbReference>
<dbReference type="Gene3D" id="3.90.110.10">
    <property type="entry name" value="Lactate dehydrogenase/glycoside hydrolase, family 4, C-terminal"/>
    <property type="match status" value="1"/>
</dbReference>
<dbReference type="Gene3D" id="3.40.50.720">
    <property type="entry name" value="NAD(P)-binding Rossmann-like Domain"/>
    <property type="match status" value="1"/>
</dbReference>
<dbReference type="HAMAP" id="MF_01517">
    <property type="entry name" value="Malate_dehydrog_2"/>
    <property type="match status" value="1"/>
</dbReference>
<dbReference type="InterPro" id="IPR001557">
    <property type="entry name" value="L-lactate/malate_DH"/>
</dbReference>
<dbReference type="InterPro" id="IPR022383">
    <property type="entry name" value="Lactate/malate_DH_C"/>
</dbReference>
<dbReference type="InterPro" id="IPR001236">
    <property type="entry name" value="Lactate/malate_DH_N"/>
</dbReference>
<dbReference type="InterPro" id="IPR015955">
    <property type="entry name" value="Lactate_DH/Glyco_Ohase_4_C"/>
</dbReference>
<dbReference type="InterPro" id="IPR010945">
    <property type="entry name" value="Malate_DH_type2"/>
</dbReference>
<dbReference type="InterPro" id="IPR036291">
    <property type="entry name" value="NAD(P)-bd_dom_sf"/>
</dbReference>
<dbReference type="NCBIfam" id="TIGR01759">
    <property type="entry name" value="MalateDH-SF1"/>
    <property type="match status" value="1"/>
</dbReference>
<dbReference type="NCBIfam" id="NF003916">
    <property type="entry name" value="PRK05442.1"/>
    <property type="match status" value="1"/>
</dbReference>
<dbReference type="PANTHER" id="PTHR23382">
    <property type="entry name" value="MALATE DEHYDROGENASE"/>
    <property type="match status" value="1"/>
</dbReference>
<dbReference type="Pfam" id="PF02866">
    <property type="entry name" value="Ldh_1_C"/>
    <property type="match status" value="1"/>
</dbReference>
<dbReference type="Pfam" id="PF00056">
    <property type="entry name" value="Ldh_1_N"/>
    <property type="match status" value="1"/>
</dbReference>
<dbReference type="PIRSF" id="PIRSF000102">
    <property type="entry name" value="Lac_mal_DH"/>
    <property type="match status" value="1"/>
</dbReference>
<dbReference type="SUPFAM" id="SSF56327">
    <property type="entry name" value="LDH C-terminal domain-like"/>
    <property type="match status" value="1"/>
</dbReference>
<dbReference type="SUPFAM" id="SSF51735">
    <property type="entry name" value="NAD(P)-binding Rossmann-fold domains"/>
    <property type="match status" value="1"/>
</dbReference>
<keyword id="KW-0520">NAD</keyword>
<keyword id="KW-0560">Oxidoreductase</keyword>
<keyword id="KW-1185">Reference proteome</keyword>
<keyword id="KW-0816">Tricarboxylic acid cycle</keyword>
<proteinExistence type="inferred from homology"/>
<name>MDH_BORA1</name>
<reference key="1">
    <citation type="journal article" date="2006" name="J. Bacteriol.">
        <title>Comparison of the genome sequence of the poultry pathogen Bordetella avium with those of B. bronchiseptica, B. pertussis, and B. parapertussis reveals extensive diversity in surface structures associated with host interaction.</title>
        <authorList>
            <person name="Sebaihia M."/>
            <person name="Preston A."/>
            <person name="Maskell D.J."/>
            <person name="Kuzmiak H."/>
            <person name="Connell T.D."/>
            <person name="King N.D."/>
            <person name="Orndorff P.E."/>
            <person name="Miyamoto D.M."/>
            <person name="Thomson N.R."/>
            <person name="Harris D."/>
            <person name="Goble A."/>
            <person name="Lord A."/>
            <person name="Murphy L."/>
            <person name="Quail M.A."/>
            <person name="Rutter S."/>
            <person name="Squares R."/>
            <person name="Squares S."/>
            <person name="Woodward J."/>
            <person name="Parkhill J."/>
            <person name="Temple L.M."/>
        </authorList>
    </citation>
    <scope>NUCLEOTIDE SEQUENCE [LARGE SCALE GENOMIC DNA]</scope>
    <source>
        <strain>197N</strain>
    </source>
</reference>
<evidence type="ECO:0000250" key="1"/>
<evidence type="ECO:0000255" key="2">
    <source>
        <dbReference type="HAMAP-Rule" id="MF_01517"/>
    </source>
</evidence>
<feature type="initiator methionine" description="Removed" evidence="1">
    <location>
        <position position="1"/>
    </location>
</feature>
<feature type="chain" id="PRO_0000294375" description="Malate dehydrogenase">
    <location>
        <begin position="2"/>
        <end position="329"/>
    </location>
</feature>
<feature type="active site" description="Proton acceptor" evidence="2">
    <location>
        <position position="190"/>
    </location>
</feature>
<feature type="binding site" evidence="2">
    <location>
        <begin position="12"/>
        <end position="18"/>
    </location>
    <ligand>
        <name>NAD(+)</name>
        <dbReference type="ChEBI" id="CHEBI:57540"/>
    </ligand>
</feature>
<feature type="binding site" evidence="2">
    <location>
        <position position="95"/>
    </location>
    <ligand>
        <name>substrate</name>
    </ligand>
</feature>
<feature type="binding site" evidence="2">
    <location>
        <position position="101"/>
    </location>
    <ligand>
        <name>substrate</name>
    </ligand>
</feature>
<feature type="binding site" evidence="2">
    <location>
        <position position="108"/>
    </location>
    <ligand>
        <name>NAD(+)</name>
        <dbReference type="ChEBI" id="CHEBI:57540"/>
    </ligand>
</feature>
<feature type="binding site" evidence="2">
    <location>
        <position position="115"/>
    </location>
    <ligand>
        <name>NAD(+)</name>
        <dbReference type="ChEBI" id="CHEBI:57540"/>
    </ligand>
</feature>
<feature type="binding site" evidence="2">
    <location>
        <begin position="132"/>
        <end position="134"/>
    </location>
    <ligand>
        <name>NAD(+)</name>
        <dbReference type="ChEBI" id="CHEBI:57540"/>
    </ligand>
</feature>
<feature type="binding site" evidence="2">
    <location>
        <position position="134"/>
    </location>
    <ligand>
        <name>substrate</name>
    </ligand>
</feature>
<feature type="binding site" evidence="2">
    <location>
        <position position="165"/>
    </location>
    <ligand>
        <name>substrate</name>
    </ligand>
</feature>
<comment type="function">
    <text evidence="2">Catalyzes the reversible oxidation of malate to oxaloacetate.</text>
</comment>
<comment type="catalytic activity">
    <reaction evidence="2">
        <text>(S)-malate + NAD(+) = oxaloacetate + NADH + H(+)</text>
        <dbReference type="Rhea" id="RHEA:21432"/>
        <dbReference type="ChEBI" id="CHEBI:15378"/>
        <dbReference type="ChEBI" id="CHEBI:15589"/>
        <dbReference type="ChEBI" id="CHEBI:16452"/>
        <dbReference type="ChEBI" id="CHEBI:57540"/>
        <dbReference type="ChEBI" id="CHEBI:57945"/>
        <dbReference type="EC" id="1.1.1.37"/>
    </reaction>
</comment>
<comment type="similarity">
    <text evidence="2">Belongs to the LDH/MDH superfamily. MDH type 2 family.</text>
</comment>